<name>SYK1_ECO57</name>
<evidence type="ECO:0000250" key="1"/>
<evidence type="ECO:0000255" key="2">
    <source>
        <dbReference type="HAMAP-Rule" id="MF_00252"/>
    </source>
</evidence>
<reference key="1">
    <citation type="journal article" date="2001" name="Nature">
        <title>Genome sequence of enterohaemorrhagic Escherichia coli O157:H7.</title>
        <authorList>
            <person name="Perna N.T."/>
            <person name="Plunkett G. III"/>
            <person name="Burland V."/>
            <person name="Mau B."/>
            <person name="Glasner J.D."/>
            <person name="Rose D.J."/>
            <person name="Mayhew G.F."/>
            <person name="Evans P.S."/>
            <person name="Gregor J."/>
            <person name="Kirkpatrick H.A."/>
            <person name="Posfai G."/>
            <person name="Hackett J."/>
            <person name="Klink S."/>
            <person name="Boutin A."/>
            <person name="Shao Y."/>
            <person name="Miller L."/>
            <person name="Grotbeck E.J."/>
            <person name="Davis N.W."/>
            <person name="Lim A."/>
            <person name="Dimalanta E.T."/>
            <person name="Potamousis K."/>
            <person name="Apodaca J."/>
            <person name="Anantharaman T.S."/>
            <person name="Lin J."/>
            <person name="Yen G."/>
            <person name="Schwartz D.C."/>
            <person name="Welch R.A."/>
            <person name="Blattner F.R."/>
        </authorList>
    </citation>
    <scope>NUCLEOTIDE SEQUENCE [LARGE SCALE GENOMIC DNA]</scope>
    <source>
        <strain>O157:H7 / EDL933 / ATCC 700927 / EHEC</strain>
    </source>
</reference>
<reference key="2">
    <citation type="journal article" date="2001" name="DNA Res.">
        <title>Complete genome sequence of enterohemorrhagic Escherichia coli O157:H7 and genomic comparison with a laboratory strain K-12.</title>
        <authorList>
            <person name="Hayashi T."/>
            <person name="Makino K."/>
            <person name="Ohnishi M."/>
            <person name="Kurokawa K."/>
            <person name="Ishii K."/>
            <person name="Yokoyama K."/>
            <person name="Han C.-G."/>
            <person name="Ohtsubo E."/>
            <person name="Nakayama K."/>
            <person name="Murata T."/>
            <person name="Tanaka M."/>
            <person name="Tobe T."/>
            <person name="Iida T."/>
            <person name="Takami H."/>
            <person name="Honda T."/>
            <person name="Sasakawa C."/>
            <person name="Ogasawara N."/>
            <person name="Yasunaga T."/>
            <person name="Kuhara S."/>
            <person name="Shiba T."/>
            <person name="Hattori M."/>
            <person name="Shinagawa H."/>
        </authorList>
    </citation>
    <scope>NUCLEOTIDE SEQUENCE [LARGE SCALE GENOMIC DNA]</scope>
    <source>
        <strain>O157:H7 / Sakai / RIMD 0509952 / EHEC</strain>
    </source>
</reference>
<dbReference type="EC" id="6.1.1.6" evidence="2"/>
<dbReference type="EMBL" id="AE005174">
    <property type="protein sequence ID" value="AAG58018.1"/>
    <property type="molecule type" value="Genomic_DNA"/>
</dbReference>
<dbReference type="EMBL" id="BA000007">
    <property type="protein sequence ID" value="BAB37185.1"/>
    <property type="molecule type" value="Genomic_DNA"/>
</dbReference>
<dbReference type="PIR" id="B91099">
    <property type="entry name" value="B91099"/>
</dbReference>
<dbReference type="PIR" id="F85944">
    <property type="entry name" value="F85944"/>
</dbReference>
<dbReference type="RefSeq" id="NP_311789.1">
    <property type="nucleotide sequence ID" value="NC_002695.1"/>
</dbReference>
<dbReference type="RefSeq" id="WP_000003075.1">
    <property type="nucleotide sequence ID" value="NZ_VOAI01000003.1"/>
</dbReference>
<dbReference type="SMR" id="Q8XD57"/>
<dbReference type="STRING" id="155864.Z4228"/>
<dbReference type="GeneID" id="916412"/>
<dbReference type="KEGG" id="ece:Z4228"/>
<dbReference type="KEGG" id="ecs:ECs_3762"/>
<dbReference type="PATRIC" id="fig|386585.9.peg.3925"/>
<dbReference type="eggNOG" id="COG1190">
    <property type="taxonomic scope" value="Bacteria"/>
</dbReference>
<dbReference type="HOGENOM" id="CLU_008255_6_2_6"/>
<dbReference type="OMA" id="DFRNEGM"/>
<dbReference type="Proteomes" id="UP000000558">
    <property type="component" value="Chromosome"/>
</dbReference>
<dbReference type="Proteomes" id="UP000002519">
    <property type="component" value="Chromosome"/>
</dbReference>
<dbReference type="GO" id="GO:0005829">
    <property type="term" value="C:cytosol"/>
    <property type="evidence" value="ECO:0007669"/>
    <property type="project" value="TreeGrafter"/>
</dbReference>
<dbReference type="GO" id="GO:0005524">
    <property type="term" value="F:ATP binding"/>
    <property type="evidence" value="ECO:0007669"/>
    <property type="project" value="UniProtKB-UniRule"/>
</dbReference>
<dbReference type="GO" id="GO:0004824">
    <property type="term" value="F:lysine-tRNA ligase activity"/>
    <property type="evidence" value="ECO:0007669"/>
    <property type="project" value="UniProtKB-UniRule"/>
</dbReference>
<dbReference type="GO" id="GO:0000287">
    <property type="term" value="F:magnesium ion binding"/>
    <property type="evidence" value="ECO:0007669"/>
    <property type="project" value="UniProtKB-UniRule"/>
</dbReference>
<dbReference type="GO" id="GO:0000049">
    <property type="term" value="F:tRNA binding"/>
    <property type="evidence" value="ECO:0007669"/>
    <property type="project" value="TreeGrafter"/>
</dbReference>
<dbReference type="GO" id="GO:0006430">
    <property type="term" value="P:lysyl-tRNA aminoacylation"/>
    <property type="evidence" value="ECO:0007669"/>
    <property type="project" value="UniProtKB-UniRule"/>
</dbReference>
<dbReference type="CDD" id="cd00775">
    <property type="entry name" value="LysRS_core"/>
    <property type="match status" value="1"/>
</dbReference>
<dbReference type="CDD" id="cd04322">
    <property type="entry name" value="LysRS_N"/>
    <property type="match status" value="1"/>
</dbReference>
<dbReference type="FunFam" id="2.40.50.140:FF:000024">
    <property type="entry name" value="Lysine--tRNA ligase"/>
    <property type="match status" value="1"/>
</dbReference>
<dbReference type="FunFam" id="3.30.930.10:FF:000001">
    <property type="entry name" value="Lysine--tRNA ligase"/>
    <property type="match status" value="1"/>
</dbReference>
<dbReference type="Gene3D" id="3.30.930.10">
    <property type="entry name" value="Bira Bifunctional Protein, Domain 2"/>
    <property type="match status" value="1"/>
</dbReference>
<dbReference type="Gene3D" id="2.40.50.140">
    <property type="entry name" value="Nucleic acid-binding proteins"/>
    <property type="match status" value="1"/>
</dbReference>
<dbReference type="HAMAP" id="MF_00252">
    <property type="entry name" value="Lys_tRNA_synth_class2"/>
    <property type="match status" value="1"/>
</dbReference>
<dbReference type="InterPro" id="IPR004364">
    <property type="entry name" value="Aa-tRNA-synt_II"/>
</dbReference>
<dbReference type="InterPro" id="IPR006195">
    <property type="entry name" value="aa-tRNA-synth_II"/>
</dbReference>
<dbReference type="InterPro" id="IPR045864">
    <property type="entry name" value="aa-tRNA-synth_II/BPL/LPL"/>
</dbReference>
<dbReference type="InterPro" id="IPR002313">
    <property type="entry name" value="Lys-tRNA-ligase_II"/>
</dbReference>
<dbReference type="InterPro" id="IPR034762">
    <property type="entry name" value="Lys-tRNA-ligase_II_bac/euk"/>
</dbReference>
<dbReference type="InterPro" id="IPR044136">
    <property type="entry name" value="Lys-tRNA-ligase_II_N"/>
</dbReference>
<dbReference type="InterPro" id="IPR018149">
    <property type="entry name" value="Lys-tRNA-synth_II_C"/>
</dbReference>
<dbReference type="InterPro" id="IPR012340">
    <property type="entry name" value="NA-bd_OB-fold"/>
</dbReference>
<dbReference type="InterPro" id="IPR004365">
    <property type="entry name" value="NA-bd_OB_tRNA"/>
</dbReference>
<dbReference type="NCBIfam" id="TIGR00499">
    <property type="entry name" value="lysS_bact"/>
    <property type="match status" value="1"/>
</dbReference>
<dbReference type="NCBIfam" id="NF001756">
    <property type="entry name" value="PRK00484.1"/>
    <property type="match status" value="1"/>
</dbReference>
<dbReference type="NCBIfam" id="NF009101">
    <property type="entry name" value="PRK12445.1"/>
    <property type="match status" value="1"/>
</dbReference>
<dbReference type="PANTHER" id="PTHR42918:SF15">
    <property type="entry name" value="LYSINE--TRNA LIGASE, CHLOROPLASTIC_MITOCHONDRIAL"/>
    <property type="match status" value="1"/>
</dbReference>
<dbReference type="PANTHER" id="PTHR42918">
    <property type="entry name" value="LYSYL-TRNA SYNTHETASE"/>
    <property type="match status" value="1"/>
</dbReference>
<dbReference type="Pfam" id="PF00152">
    <property type="entry name" value="tRNA-synt_2"/>
    <property type="match status" value="1"/>
</dbReference>
<dbReference type="Pfam" id="PF01336">
    <property type="entry name" value="tRNA_anti-codon"/>
    <property type="match status" value="1"/>
</dbReference>
<dbReference type="PIRSF" id="PIRSF039101">
    <property type="entry name" value="LysRS2"/>
    <property type="match status" value="1"/>
</dbReference>
<dbReference type="PRINTS" id="PR00982">
    <property type="entry name" value="TRNASYNTHLYS"/>
</dbReference>
<dbReference type="SUPFAM" id="SSF55681">
    <property type="entry name" value="Class II aaRS and biotin synthetases"/>
    <property type="match status" value="1"/>
</dbReference>
<dbReference type="SUPFAM" id="SSF50249">
    <property type="entry name" value="Nucleic acid-binding proteins"/>
    <property type="match status" value="1"/>
</dbReference>
<dbReference type="PROSITE" id="PS50862">
    <property type="entry name" value="AA_TRNA_LIGASE_II"/>
    <property type="match status" value="1"/>
</dbReference>
<comment type="catalytic activity">
    <reaction evidence="2">
        <text>tRNA(Lys) + L-lysine + ATP = L-lysyl-tRNA(Lys) + AMP + diphosphate</text>
        <dbReference type="Rhea" id="RHEA:20792"/>
        <dbReference type="Rhea" id="RHEA-COMP:9696"/>
        <dbReference type="Rhea" id="RHEA-COMP:9697"/>
        <dbReference type="ChEBI" id="CHEBI:30616"/>
        <dbReference type="ChEBI" id="CHEBI:32551"/>
        <dbReference type="ChEBI" id="CHEBI:33019"/>
        <dbReference type="ChEBI" id="CHEBI:78442"/>
        <dbReference type="ChEBI" id="CHEBI:78529"/>
        <dbReference type="ChEBI" id="CHEBI:456215"/>
        <dbReference type="EC" id="6.1.1.6"/>
    </reaction>
</comment>
<comment type="cofactor">
    <cofactor evidence="2">
        <name>Mg(2+)</name>
        <dbReference type="ChEBI" id="CHEBI:18420"/>
    </cofactor>
    <text evidence="2">Binds 3 Mg(2+) ions per subunit.</text>
</comment>
<comment type="subunit">
    <text evidence="2">Homodimer.</text>
</comment>
<comment type="subcellular location">
    <subcellularLocation>
        <location evidence="2">Cytoplasm</location>
    </subcellularLocation>
</comment>
<comment type="similarity">
    <text evidence="2">Belongs to the class-II aminoacyl-tRNA synthetase family.</text>
</comment>
<organism>
    <name type="scientific">Escherichia coli O157:H7</name>
    <dbReference type="NCBI Taxonomy" id="83334"/>
    <lineage>
        <taxon>Bacteria</taxon>
        <taxon>Pseudomonadati</taxon>
        <taxon>Pseudomonadota</taxon>
        <taxon>Gammaproteobacteria</taxon>
        <taxon>Enterobacterales</taxon>
        <taxon>Enterobacteriaceae</taxon>
        <taxon>Escherichia</taxon>
    </lineage>
</organism>
<proteinExistence type="inferred from homology"/>
<gene>
    <name evidence="2" type="primary">lysS</name>
    <name type="ordered locus">Z4228</name>
    <name type="ordered locus">ECs3762</name>
</gene>
<keyword id="KW-0030">Aminoacyl-tRNA synthetase</keyword>
<keyword id="KW-0067">ATP-binding</keyword>
<keyword id="KW-0963">Cytoplasm</keyword>
<keyword id="KW-0436">Ligase</keyword>
<keyword id="KW-0460">Magnesium</keyword>
<keyword id="KW-0479">Metal-binding</keyword>
<keyword id="KW-0547">Nucleotide-binding</keyword>
<keyword id="KW-0648">Protein biosynthesis</keyword>
<keyword id="KW-1185">Reference proteome</keyword>
<sequence>MSEQHAQGADAVVDLNNELKTRREKLANLREQGIAFPNDFRRDHTSDQLHAEFDGKENEELEALNIEVAVAGRMMTRRIMGKASFVTLQDVGGRIQLYVARDDLPEGVYNEQFKKWDLGDILGAKGKLFKTKTGELSIHCTELRLLTKALRPLPDKFHGLQDQEARYRQRYLDLISNDESRNTFKVRSQILSGIRQFMVNRGFMEVETPMMQVIPGGAAARPFITHHNALDLDMYLRIAPELYLKRLVVGGFERVFEINRNFRNEGISVRHNPEFTMMELYMAYADYKDLIELTESLFRTLAQDILGKTEVTYGDVTLDFGKPFEKLTMREAIKKYRPETDMADLDNFDSAKAIVESIGIHVEKSWGLGRIVTEIFEEVAEAHLIQPTFITEYPAEVSPLARRNDVNPEITDRFEFFIGGREIGNGFSELNDAEDQAQRFLDQVAAKDAGDDEAMFYDEDYVTALEHGLPPTAGLGIGIDRMVMLFTNSHTIRDVILFPAMRPVK</sequence>
<feature type="initiator methionine" description="Removed" evidence="1">
    <location>
        <position position="1"/>
    </location>
</feature>
<feature type="chain" id="PRO_0000152624" description="Lysine--tRNA ligase">
    <location>
        <begin position="2"/>
        <end position="505"/>
    </location>
</feature>
<feature type="binding site" evidence="2">
    <location>
        <position position="415"/>
    </location>
    <ligand>
        <name>Mg(2+)</name>
        <dbReference type="ChEBI" id="CHEBI:18420"/>
        <label>1</label>
    </ligand>
</feature>
<feature type="binding site" evidence="2">
    <location>
        <position position="422"/>
    </location>
    <ligand>
        <name>Mg(2+)</name>
        <dbReference type="ChEBI" id="CHEBI:18420"/>
        <label>1</label>
    </ligand>
</feature>
<feature type="binding site" evidence="2">
    <location>
        <position position="422"/>
    </location>
    <ligand>
        <name>Mg(2+)</name>
        <dbReference type="ChEBI" id="CHEBI:18420"/>
        <label>2</label>
    </ligand>
</feature>
<protein>
    <recommendedName>
        <fullName evidence="2">Lysine--tRNA ligase</fullName>
        <ecNumber evidence="2">6.1.1.6</ecNumber>
    </recommendedName>
    <alternativeName>
        <fullName evidence="2">Lysyl-tRNA synthetase</fullName>
        <shortName evidence="2">LysRS</shortName>
    </alternativeName>
</protein>
<accession>Q8XD57</accession>